<feature type="chain" id="PRO_1000006706" description="Aspartate--tRNA(Asp/Asn) ligase">
    <location>
        <begin position="1"/>
        <end position="438"/>
    </location>
</feature>
<feature type="region of interest" description="Aspartate" evidence="1">
    <location>
        <begin position="198"/>
        <end position="201"/>
    </location>
</feature>
<feature type="binding site" evidence="1">
    <location>
        <position position="176"/>
    </location>
    <ligand>
        <name>L-aspartate</name>
        <dbReference type="ChEBI" id="CHEBI:29991"/>
    </ligand>
</feature>
<feature type="binding site" evidence="1">
    <location>
        <begin position="220"/>
        <end position="222"/>
    </location>
    <ligand>
        <name>ATP</name>
        <dbReference type="ChEBI" id="CHEBI:30616"/>
    </ligand>
</feature>
<feature type="binding site" evidence="1">
    <location>
        <position position="220"/>
    </location>
    <ligand>
        <name>L-aspartate</name>
        <dbReference type="ChEBI" id="CHEBI:29991"/>
    </ligand>
</feature>
<feature type="binding site" evidence="1">
    <location>
        <begin position="228"/>
        <end position="230"/>
    </location>
    <ligand>
        <name>ATP</name>
        <dbReference type="ChEBI" id="CHEBI:30616"/>
    </ligand>
</feature>
<feature type="binding site" evidence="1">
    <location>
        <position position="361"/>
    </location>
    <ligand>
        <name>ATP</name>
        <dbReference type="ChEBI" id="CHEBI:30616"/>
    </ligand>
</feature>
<feature type="binding site" evidence="1">
    <location>
        <position position="361"/>
    </location>
    <ligand>
        <name>Mg(2+)</name>
        <dbReference type="ChEBI" id="CHEBI:18420"/>
        <label>2</label>
    </ligand>
</feature>
<feature type="binding site" evidence="1">
    <location>
        <position position="361"/>
    </location>
    <ligand>
        <name>Mg(2+)</name>
        <dbReference type="ChEBI" id="CHEBI:18420"/>
        <label>3</label>
    </ligand>
</feature>
<feature type="binding site" evidence="1">
    <location>
        <position position="364"/>
    </location>
    <ligand>
        <name>L-aspartate</name>
        <dbReference type="ChEBI" id="CHEBI:29991"/>
    </ligand>
</feature>
<feature type="binding site" evidence="1">
    <location>
        <position position="364"/>
    </location>
    <ligand>
        <name>Mg(2+)</name>
        <dbReference type="ChEBI" id="CHEBI:18420"/>
        <label>2</label>
    </ligand>
</feature>
<feature type="binding site" evidence="1">
    <location>
        <position position="368"/>
    </location>
    <ligand>
        <name>L-aspartate</name>
        <dbReference type="ChEBI" id="CHEBI:29991"/>
    </ligand>
</feature>
<feature type="binding site" evidence="1">
    <location>
        <begin position="409"/>
        <end position="412"/>
    </location>
    <ligand>
        <name>ATP</name>
        <dbReference type="ChEBI" id="CHEBI:30616"/>
    </ligand>
</feature>
<feature type="site" description="Important for tRNA non-discrimination" evidence="1">
    <location>
        <position position="91"/>
    </location>
</feature>
<sequence length="438" mass="50292">MYLIADWRRTHYSEEVIPEMDGQEVILMGWVHSIRALGKLAFVILRDREGTIQAVVPKQKVDEETFEIAKKLGKEDIIAIRGKVVANEKAPKGFEVIPIEIRVLNKADAPLPLDPSEKVPAEIDTRLDKRFLDIRRPKIQAIFKIRSEMLRSIRKTFADEGFVEVNTPKLVASATEGGTELFPISYFEKEAFLGQSPQLYKQMMMAGGFDKVFEIAQIFRAEEHNTRRHLNEAVSIDTEMSFVNEKDAMAMLEKVVYNCYADIEYNRPQEIELLELNWEIPEKTFDKLTYTEAIDIAISKGVEIEWGEDLSRAAERAVGDEMGGLYFITEWPTQTRPFYTLPHENDNKVCKAFDLMYKELEISSGAQRVHKYDLLVENISNMGMNPDSFETYLEAFKFGMPPHAGWGLGADRFAMVLTAQDNIRECVLFPRDRQRLTP</sequence>
<reference key="1">
    <citation type="submission" date="2007-06" db="EMBL/GenBank/DDBJ databases">
        <title>Complete sequence of Methanococcus maripaludis C7.</title>
        <authorList>
            <consortium name="US DOE Joint Genome Institute"/>
            <person name="Copeland A."/>
            <person name="Lucas S."/>
            <person name="Lapidus A."/>
            <person name="Barry K."/>
            <person name="Glavina del Rio T."/>
            <person name="Dalin E."/>
            <person name="Tice H."/>
            <person name="Pitluck S."/>
            <person name="Clum A."/>
            <person name="Schmutz J."/>
            <person name="Larimer F."/>
            <person name="Land M."/>
            <person name="Hauser L."/>
            <person name="Kyrpides N."/>
            <person name="Anderson I."/>
            <person name="Sieprawska-Lupa M."/>
            <person name="Whitman W.B."/>
            <person name="Richardson P."/>
        </authorList>
    </citation>
    <scope>NUCLEOTIDE SEQUENCE [LARGE SCALE GENOMIC DNA]</scope>
    <source>
        <strain>C7 / ATCC BAA-1331</strain>
    </source>
</reference>
<accession>A6VHK5</accession>
<gene>
    <name evidence="1" type="primary">aspS</name>
    <name type="ordered locus">MmarC7_0864</name>
</gene>
<comment type="function">
    <text evidence="1">Aspartyl-tRNA synthetase with relaxed tRNA specificity since it is able to aspartylate not only its cognate tRNA(Asp) but also tRNA(Asn). Reaction proceeds in two steps: L-aspartate is first activated by ATP to form Asp-AMP and then transferred to the acceptor end of tRNA(Asp/Asn).</text>
</comment>
<comment type="catalytic activity">
    <reaction evidence="1">
        <text>tRNA(Asx) + L-aspartate + ATP = L-aspartyl-tRNA(Asx) + AMP + diphosphate</text>
        <dbReference type="Rhea" id="RHEA:18349"/>
        <dbReference type="Rhea" id="RHEA-COMP:9710"/>
        <dbReference type="Rhea" id="RHEA-COMP:9711"/>
        <dbReference type="ChEBI" id="CHEBI:29991"/>
        <dbReference type="ChEBI" id="CHEBI:30616"/>
        <dbReference type="ChEBI" id="CHEBI:33019"/>
        <dbReference type="ChEBI" id="CHEBI:78442"/>
        <dbReference type="ChEBI" id="CHEBI:78516"/>
        <dbReference type="ChEBI" id="CHEBI:456215"/>
        <dbReference type="EC" id="6.1.1.23"/>
    </reaction>
</comment>
<comment type="cofactor">
    <cofactor evidence="1">
        <name>Mg(2+)</name>
        <dbReference type="ChEBI" id="CHEBI:18420"/>
    </cofactor>
    <text evidence="1">Binds 3 Mg(2+) cations per subunit. The strongest magnesium site (Mg1) is bound to the beta- and gamma-phosphates of ATP and four water molecules complete its coordination sphere.</text>
</comment>
<comment type="subunit">
    <text evidence="1">Homodimer.</text>
</comment>
<comment type="subcellular location">
    <subcellularLocation>
        <location evidence="1">Cytoplasm</location>
    </subcellularLocation>
</comment>
<comment type="similarity">
    <text evidence="1">Belongs to the class-II aminoacyl-tRNA synthetase family. Type 2 subfamily.</text>
</comment>
<keyword id="KW-0030">Aminoacyl-tRNA synthetase</keyword>
<keyword id="KW-0067">ATP-binding</keyword>
<keyword id="KW-0963">Cytoplasm</keyword>
<keyword id="KW-0436">Ligase</keyword>
<keyword id="KW-0460">Magnesium</keyword>
<keyword id="KW-0479">Metal-binding</keyword>
<keyword id="KW-0547">Nucleotide-binding</keyword>
<keyword id="KW-0648">Protein biosynthesis</keyword>
<protein>
    <recommendedName>
        <fullName evidence="1">Aspartate--tRNA(Asp/Asn) ligase</fullName>
        <ecNumber evidence="1">6.1.1.23</ecNumber>
    </recommendedName>
    <alternativeName>
        <fullName evidence="1">Aspartyl-tRNA synthetase</fullName>
        <shortName evidence="1">AspRS</shortName>
    </alternativeName>
    <alternativeName>
        <fullName evidence="1">Non-discriminating aspartyl-tRNA synthetase</fullName>
        <shortName evidence="1">ND-AspRS</shortName>
    </alternativeName>
</protein>
<organism>
    <name type="scientific">Methanococcus maripaludis (strain C7 / ATCC BAA-1331)</name>
    <dbReference type="NCBI Taxonomy" id="426368"/>
    <lineage>
        <taxon>Archaea</taxon>
        <taxon>Methanobacteriati</taxon>
        <taxon>Methanobacteriota</taxon>
        <taxon>Methanomada group</taxon>
        <taxon>Methanococci</taxon>
        <taxon>Methanococcales</taxon>
        <taxon>Methanococcaceae</taxon>
        <taxon>Methanococcus</taxon>
    </lineage>
</organism>
<evidence type="ECO:0000255" key="1">
    <source>
        <dbReference type="HAMAP-Rule" id="MF_02075"/>
    </source>
</evidence>
<dbReference type="EC" id="6.1.1.23" evidence="1"/>
<dbReference type="EMBL" id="CP000745">
    <property type="protein sequence ID" value="ABR65931.1"/>
    <property type="molecule type" value="Genomic_DNA"/>
</dbReference>
<dbReference type="SMR" id="A6VHK5"/>
<dbReference type="STRING" id="426368.MmarC7_0864"/>
<dbReference type="KEGG" id="mmz:MmarC7_0864"/>
<dbReference type="eggNOG" id="arCOG00406">
    <property type="taxonomic scope" value="Archaea"/>
</dbReference>
<dbReference type="HOGENOM" id="CLU_004553_2_1_2"/>
<dbReference type="OrthoDB" id="5908at2157"/>
<dbReference type="GO" id="GO:0017101">
    <property type="term" value="C:aminoacyl-tRNA synthetase multienzyme complex"/>
    <property type="evidence" value="ECO:0007669"/>
    <property type="project" value="TreeGrafter"/>
</dbReference>
<dbReference type="GO" id="GO:0005829">
    <property type="term" value="C:cytosol"/>
    <property type="evidence" value="ECO:0007669"/>
    <property type="project" value="TreeGrafter"/>
</dbReference>
<dbReference type="GO" id="GO:0004815">
    <property type="term" value="F:aspartate-tRNA ligase activity"/>
    <property type="evidence" value="ECO:0007669"/>
    <property type="project" value="UniProtKB-UniRule"/>
</dbReference>
<dbReference type="GO" id="GO:0050560">
    <property type="term" value="F:aspartate-tRNA(Asn) ligase activity"/>
    <property type="evidence" value="ECO:0007669"/>
    <property type="project" value="UniProtKB-EC"/>
</dbReference>
<dbReference type="GO" id="GO:0005524">
    <property type="term" value="F:ATP binding"/>
    <property type="evidence" value="ECO:0007669"/>
    <property type="project" value="UniProtKB-UniRule"/>
</dbReference>
<dbReference type="GO" id="GO:0000287">
    <property type="term" value="F:magnesium ion binding"/>
    <property type="evidence" value="ECO:0007669"/>
    <property type="project" value="UniProtKB-UniRule"/>
</dbReference>
<dbReference type="GO" id="GO:0003723">
    <property type="term" value="F:RNA binding"/>
    <property type="evidence" value="ECO:0007669"/>
    <property type="project" value="TreeGrafter"/>
</dbReference>
<dbReference type="GO" id="GO:0006422">
    <property type="term" value="P:aspartyl-tRNA aminoacylation"/>
    <property type="evidence" value="ECO:0007669"/>
    <property type="project" value="UniProtKB-UniRule"/>
</dbReference>
<dbReference type="CDD" id="cd00776">
    <property type="entry name" value="AsxRS_core"/>
    <property type="match status" value="1"/>
</dbReference>
<dbReference type="CDD" id="cd04316">
    <property type="entry name" value="ND_PkAspRS_like_N"/>
    <property type="match status" value="1"/>
</dbReference>
<dbReference type="FunFam" id="3.30.930.10:FF:000038">
    <property type="entry name" value="Aspartate--tRNA ligase"/>
    <property type="match status" value="1"/>
</dbReference>
<dbReference type="FunFam" id="2.40.50.140:FF:000324">
    <property type="entry name" value="Aspartate--tRNA(Asp/Asn) ligase"/>
    <property type="match status" value="1"/>
</dbReference>
<dbReference type="Gene3D" id="3.30.930.10">
    <property type="entry name" value="Bira Bifunctional Protein, Domain 2"/>
    <property type="match status" value="1"/>
</dbReference>
<dbReference type="Gene3D" id="2.40.50.140">
    <property type="entry name" value="Nucleic acid-binding proteins"/>
    <property type="match status" value="1"/>
</dbReference>
<dbReference type="HAMAP" id="MF_02075">
    <property type="entry name" value="Asp_tRNA_synth_type2"/>
    <property type="match status" value="1"/>
</dbReference>
<dbReference type="InterPro" id="IPR004364">
    <property type="entry name" value="Aa-tRNA-synt_II"/>
</dbReference>
<dbReference type="InterPro" id="IPR006195">
    <property type="entry name" value="aa-tRNA-synth_II"/>
</dbReference>
<dbReference type="InterPro" id="IPR045864">
    <property type="entry name" value="aa-tRNA-synth_II/BPL/LPL"/>
</dbReference>
<dbReference type="InterPro" id="IPR004523">
    <property type="entry name" value="Asp-tRNA_synthase_2"/>
</dbReference>
<dbReference type="InterPro" id="IPR002312">
    <property type="entry name" value="Asp/Asn-tRNA-synth_IIb"/>
</dbReference>
<dbReference type="InterPro" id="IPR012340">
    <property type="entry name" value="NA-bd_OB-fold"/>
</dbReference>
<dbReference type="InterPro" id="IPR004365">
    <property type="entry name" value="NA-bd_OB_tRNA"/>
</dbReference>
<dbReference type="NCBIfam" id="TIGR00458">
    <property type="entry name" value="aspS_nondisc"/>
    <property type="match status" value="1"/>
</dbReference>
<dbReference type="NCBIfam" id="NF003483">
    <property type="entry name" value="PRK05159.1"/>
    <property type="match status" value="1"/>
</dbReference>
<dbReference type="PANTHER" id="PTHR43450:SF1">
    <property type="entry name" value="ASPARTATE--TRNA LIGASE, CYTOPLASMIC"/>
    <property type="match status" value="1"/>
</dbReference>
<dbReference type="PANTHER" id="PTHR43450">
    <property type="entry name" value="ASPARTYL-TRNA SYNTHETASE"/>
    <property type="match status" value="1"/>
</dbReference>
<dbReference type="Pfam" id="PF00152">
    <property type="entry name" value="tRNA-synt_2"/>
    <property type="match status" value="1"/>
</dbReference>
<dbReference type="Pfam" id="PF01336">
    <property type="entry name" value="tRNA_anti-codon"/>
    <property type="match status" value="1"/>
</dbReference>
<dbReference type="PRINTS" id="PR01042">
    <property type="entry name" value="TRNASYNTHASP"/>
</dbReference>
<dbReference type="SUPFAM" id="SSF55681">
    <property type="entry name" value="Class II aaRS and biotin synthetases"/>
    <property type="match status" value="1"/>
</dbReference>
<dbReference type="SUPFAM" id="SSF50249">
    <property type="entry name" value="Nucleic acid-binding proteins"/>
    <property type="match status" value="1"/>
</dbReference>
<dbReference type="PROSITE" id="PS50862">
    <property type="entry name" value="AA_TRNA_LIGASE_II"/>
    <property type="match status" value="1"/>
</dbReference>
<name>SYDND_METM7</name>
<proteinExistence type="inferred from homology"/>